<comment type="function">
    <text evidence="1">Catalyzes the transfer of a dimethylallyl group onto the adenine at position 37 in tRNAs that read codons beginning with uridine, leading to the formation of N6-(dimethylallyl)adenosine (i(6)A).</text>
</comment>
<comment type="catalytic activity">
    <reaction evidence="1">
        <text>adenosine(37) in tRNA + dimethylallyl diphosphate = N(6)-dimethylallyladenosine(37) in tRNA + diphosphate</text>
        <dbReference type="Rhea" id="RHEA:26482"/>
        <dbReference type="Rhea" id="RHEA-COMP:10162"/>
        <dbReference type="Rhea" id="RHEA-COMP:10375"/>
        <dbReference type="ChEBI" id="CHEBI:33019"/>
        <dbReference type="ChEBI" id="CHEBI:57623"/>
        <dbReference type="ChEBI" id="CHEBI:74411"/>
        <dbReference type="ChEBI" id="CHEBI:74415"/>
        <dbReference type="EC" id="2.5.1.75"/>
    </reaction>
</comment>
<comment type="cofactor">
    <cofactor evidence="1">
        <name>Mg(2+)</name>
        <dbReference type="ChEBI" id="CHEBI:18420"/>
    </cofactor>
</comment>
<comment type="subunit">
    <text evidence="1">Monomer.</text>
</comment>
<comment type="similarity">
    <text evidence="1">Belongs to the IPP transferase family.</text>
</comment>
<accession>B9E1Z2</accession>
<organism>
    <name type="scientific">Clostridium kluyveri (strain NBRC 12016)</name>
    <dbReference type="NCBI Taxonomy" id="583346"/>
    <lineage>
        <taxon>Bacteria</taxon>
        <taxon>Bacillati</taxon>
        <taxon>Bacillota</taxon>
        <taxon>Clostridia</taxon>
        <taxon>Eubacteriales</taxon>
        <taxon>Clostridiaceae</taxon>
        <taxon>Clostridium</taxon>
    </lineage>
</organism>
<gene>
    <name evidence="1" type="primary">miaA</name>
    <name type="ordered locus">CKR_1466</name>
</gene>
<sequence length="309" mass="36017">MKKLFILAGPTAVGKTDISIEVAKKIDGEIISADSMQIYKYMNIGSAKITKGEMQEIPHYLIDIIDPKENFNVSRYKNLAEKTIEDIYSRNKFPMLVGGTGLYINSLICNYDFTDAKVDVNYRNYLENLAKVQGREYVHSLLKDIDAVSYERLYPNDLKRVVRALEVHKLTGKTIGEFNSKDSLYDIPYKIYYFVLNMDRVKLYERINKRVDLMIEQGLIDEVKNLRSMGYTKDMQSMKGIGYKELIRYLEGDISLDEAVYLIKKGSRNYAKRQLTWFRKDERVIWVNKDEFTSNKEIVNYIINTLVTC</sequence>
<proteinExistence type="inferred from homology"/>
<protein>
    <recommendedName>
        <fullName evidence="1">tRNA dimethylallyltransferase</fullName>
        <ecNumber evidence="1">2.5.1.75</ecNumber>
    </recommendedName>
    <alternativeName>
        <fullName evidence="1">Dimethylallyl diphosphate:tRNA dimethylallyltransferase</fullName>
        <shortName evidence="1">DMAPP:tRNA dimethylallyltransferase</shortName>
        <shortName evidence="1">DMATase</shortName>
    </alternativeName>
    <alternativeName>
        <fullName evidence="1">Isopentenyl-diphosphate:tRNA isopentenyltransferase</fullName>
        <shortName evidence="1">IPP transferase</shortName>
        <shortName evidence="1">IPPT</shortName>
        <shortName evidence="1">IPTase</shortName>
    </alternativeName>
</protein>
<dbReference type="EC" id="2.5.1.75" evidence="1"/>
<dbReference type="EMBL" id="AP009049">
    <property type="protein sequence ID" value="BAH06517.1"/>
    <property type="molecule type" value="Genomic_DNA"/>
</dbReference>
<dbReference type="RefSeq" id="WP_012101971.1">
    <property type="nucleotide sequence ID" value="NC_011837.1"/>
</dbReference>
<dbReference type="SMR" id="B9E1Z2"/>
<dbReference type="KEGG" id="ckr:CKR_1466"/>
<dbReference type="HOGENOM" id="CLU_032616_0_1_9"/>
<dbReference type="Proteomes" id="UP000007969">
    <property type="component" value="Chromosome"/>
</dbReference>
<dbReference type="GO" id="GO:0005524">
    <property type="term" value="F:ATP binding"/>
    <property type="evidence" value="ECO:0007669"/>
    <property type="project" value="UniProtKB-UniRule"/>
</dbReference>
<dbReference type="GO" id="GO:0052381">
    <property type="term" value="F:tRNA dimethylallyltransferase activity"/>
    <property type="evidence" value="ECO:0007669"/>
    <property type="project" value="UniProtKB-UniRule"/>
</dbReference>
<dbReference type="GO" id="GO:0006400">
    <property type="term" value="P:tRNA modification"/>
    <property type="evidence" value="ECO:0007669"/>
    <property type="project" value="TreeGrafter"/>
</dbReference>
<dbReference type="Gene3D" id="1.10.20.140">
    <property type="match status" value="1"/>
</dbReference>
<dbReference type="Gene3D" id="3.40.50.300">
    <property type="entry name" value="P-loop containing nucleotide triphosphate hydrolases"/>
    <property type="match status" value="1"/>
</dbReference>
<dbReference type="HAMAP" id="MF_00185">
    <property type="entry name" value="IPP_trans"/>
    <property type="match status" value="1"/>
</dbReference>
<dbReference type="InterPro" id="IPR039657">
    <property type="entry name" value="Dimethylallyltransferase"/>
</dbReference>
<dbReference type="InterPro" id="IPR018022">
    <property type="entry name" value="IPT"/>
</dbReference>
<dbReference type="InterPro" id="IPR027417">
    <property type="entry name" value="P-loop_NTPase"/>
</dbReference>
<dbReference type="NCBIfam" id="TIGR00174">
    <property type="entry name" value="miaA"/>
    <property type="match status" value="1"/>
</dbReference>
<dbReference type="PANTHER" id="PTHR11088">
    <property type="entry name" value="TRNA DIMETHYLALLYLTRANSFERASE"/>
    <property type="match status" value="1"/>
</dbReference>
<dbReference type="PANTHER" id="PTHR11088:SF60">
    <property type="entry name" value="TRNA DIMETHYLALLYLTRANSFERASE"/>
    <property type="match status" value="1"/>
</dbReference>
<dbReference type="Pfam" id="PF01715">
    <property type="entry name" value="IPPT"/>
    <property type="match status" value="1"/>
</dbReference>
<dbReference type="SUPFAM" id="SSF52540">
    <property type="entry name" value="P-loop containing nucleoside triphosphate hydrolases"/>
    <property type="match status" value="2"/>
</dbReference>
<keyword id="KW-0067">ATP-binding</keyword>
<keyword id="KW-0460">Magnesium</keyword>
<keyword id="KW-0547">Nucleotide-binding</keyword>
<keyword id="KW-0808">Transferase</keyword>
<keyword id="KW-0819">tRNA processing</keyword>
<reference key="1">
    <citation type="submission" date="2005-09" db="EMBL/GenBank/DDBJ databases">
        <title>Complete genome sequence of Clostridium kluyveri and comparative genomics of Clostridia species.</title>
        <authorList>
            <person name="Inui M."/>
            <person name="Nonaka H."/>
            <person name="Shinoda Y."/>
            <person name="Ikenaga Y."/>
            <person name="Abe M."/>
            <person name="Naito K."/>
            <person name="Vertes A.A."/>
            <person name="Yukawa H."/>
        </authorList>
    </citation>
    <scope>NUCLEOTIDE SEQUENCE [LARGE SCALE GENOMIC DNA]</scope>
    <source>
        <strain>NBRC 12016</strain>
    </source>
</reference>
<feature type="chain" id="PRO_1000191855" description="tRNA dimethylallyltransferase">
    <location>
        <begin position="1"/>
        <end position="309"/>
    </location>
</feature>
<feature type="region of interest" description="Interaction with substrate tRNA" evidence="1">
    <location>
        <begin position="34"/>
        <end position="37"/>
    </location>
</feature>
<feature type="binding site" evidence="1">
    <location>
        <begin position="9"/>
        <end position="16"/>
    </location>
    <ligand>
        <name>ATP</name>
        <dbReference type="ChEBI" id="CHEBI:30616"/>
    </ligand>
</feature>
<feature type="binding site" evidence="1">
    <location>
        <begin position="11"/>
        <end position="16"/>
    </location>
    <ligand>
        <name>substrate</name>
    </ligand>
</feature>
<feature type="site" description="Interaction with substrate tRNA" evidence="1">
    <location>
        <position position="100"/>
    </location>
</feature>
<feature type="site" description="Interaction with substrate tRNA" evidence="1">
    <location>
        <position position="123"/>
    </location>
</feature>
<evidence type="ECO:0000255" key="1">
    <source>
        <dbReference type="HAMAP-Rule" id="MF_00185"/>
    </source>
</evidence>
<name>MIAA_CLOK1</name>